<organism>
    <name type="scientific">Saccharomyces cerevisiae (strain ATCC 204508 / S288c)</name>
    <name type="common">Baker's yeast</name>
    <dbReference type="NCBI Taxonomy" id="559292"/>
    <lineage>
        <taxon>Eukaryota</taxon>
        <taxon>Fungi</taxon>
        <taxon>Dikarya</taxon>
        <taxon>Ascomycota</taxon>
        <taxon>Saccharomycotina</taxon>
        <taxon>Saccharomycetes</taxon>
        <taxon>Saccharomycetales</taxon>
        <taxon>Saccharomycetaceae</taxon>
        <taxon>Saccharomyces</taxon>
    </lineage>
</organism>
<sequence length="187" mass="20118">MQVSPAIVKGIAVSSLGLYAGILTSSTVISITTPINVLTQHLKNVLCTLGCWSTVLGGLATGAFGLSYYLAAPGERPNYLLCGLGVAPLSAAYLYLVSLFNHKLAPKCTRDQNDLEKQKDEKLPQHHPEVKDGEAACPFSKMNNAKTLKPESERSVKCHSYMSLHMSIVTGITIFTFGKCILDGFKA</sequence>
<keyword id="KW-0472">Membrane</keyword>
<keyword id="KW-1185">Reference proteome</keyword>
<keyword id="KW-0812">Transmembrane</keyword>
<keyword id="KW-1133">Transmembrane helix</keyword>
<gene>
    <name type="primary">SCM4</name>
    <name type="ordered locus">YGR049W</name>
</gene>
<comment type="subcellular location">
    <subcellularLocation>
        <location evidence="4">Membrane</location>
        <topology evidence="4">Multi-pass membrane protein</topology>
    </subcellularLocation>
</comment>
<comment type="miscellaneous">
    <text evidence="3">Present with 3210 molecules/cell in log phase SD medium.</text>
</comment>
<comment type="similarity">
    <text evidence="4">Belongs to the ATG33 family.</text>
</comment>
<proteinExistence type="evidence at protein level"/>
<reference key="1">
    <citation type="journal article" date="1992" name="Mol. Gen. Genet.">
        <title>SCM4, a gene that suppresses mutant cdc4 function in budding yeast.</title>
        <authorList>
            <person name="Smith S.A."/>
            <person name="Kumar P."/>
            <person name="Johnston I."/>
            <person name="Rosamond J."/>
        </authorList>
    </citation>
    <scope>NUCLEOTIDE SEQUENCE [GENOMIC DNA]</scope>
</reference>
<reference key="2">
    <citation type="journal article" date="2005" name="Nat. Genet.">
        <title>Quantitative trait loci mapped to single-nucleotide resolution in yeast.</title>
        <authorList>
            <person name="Deutschbauer A.M."/>
            <person name="Davis R.W."/>
        </authorList>
    </citation>
    <scope>NUCLEOTIDE SEQUENCE [GENOMIC DNA]</scope>
    <source>
        <strain>SK1</strain>
    </source>
</reference>
<reference key="3">
    <citation type="journal article" date="1997" name="Nature">
        <title>The nucleotide sequence of Saccharomyces cerevisiae chromosome VII.</title>
        <authorList>
            <person name="Tettelin H."/>
            <person name="Agostoni-Carbone M.L."/>
            <person name="Albermann K."/>
            <person name="Albers M."/>
            <person name="Arroyo J."/>
            <person name="Backes U."/>
            <person name="Barreiros T."/>
            <person name="Bertani I."/>
            <person name="Bjourson A.J."/>
            <person name="Brueckner M."/>
            <person name="Bruschi C.V."/>
            <person name="Carignani G."/>
            <person name="Castagnoli L."/>
            <person name="Cerdan E."/>
            <person name="Clemente M.L."/>
            <person name="Coblenz A."/>
            <person name="Coglievina M."/>
            <person name="Coissac E."/>
            <person name="Defoor E."/>
            <person name="Del Bino S."/>
            <person name="Delius H."/>
            <person name="Delneri D."/>
            <person name="de Wergifosse P."/>
            <person name="Dujon B."/>
            <person name="Durand P."/>
            <person name="Entian K.-D."/>
            <person name="Eraso P."/>
            <person name="Escribano V."/>
            <person name="Fabiani L."/>
            <person name="Fartmann B."/>
            <person name="Feroli F."/>
            <person name="Feuermann M."/>
            <person name="Frontali L."/>
            <person name="Garcia-Gonzalez M."/>
            <person name="Garcia-Saez M.I."/>
            <person name="Goffeau A."/>
            <person name="Guerreiro P."/>
            <person name="Hani J."/>
            <person name="Hansen M."/>
            <person name="Hebling U."/>
            <person name="Hernandez K."/>
            <person name="Heumann K."/>
            <person name="Hilger F."/>
            <person name="Hofmann B."/>
            <person name="Indge K.J."/>
            <person name="James C.M."/>
            <person name="Klima R."/>
            <person name="Koetter P."/>
            <person name="Kramer B."/>
            <person name="Kramer W."/>
            <person name="Lauquin G."/>
            <person name="Leuther H."/>
            <person name="Louis E.J."/>
            <person name="Maillier E."/>
            <person name="Marconi A."/>
            <person name="Martegani E."/>
            <person name="Mazon M.J."/>
            <person name="Mazzoni C."/>
            <person name="McReynolds A.D.K."/>
            <person name="Melchioretto P."/>
            <person name="Mewes H.-W."/>
            <person name="Minenkova O."/>
            <person name="Mueller-Auer S."/>
            <person name="Nawrocki A."/>
            <person name="Netter P."/>
            <person name="Neu R."/>
            <person name="Nombela C."/>
            <person name="Oliver S.G."/>
            <person name="Panzeri L."/>
            <person name="Paoluzi S."/>
            <person name="Plevani P."/>
            <person name="Portetelle D."/>
            <person name="Portillo F."/>
            <person name="Potier S."/>
            <person name="Purnelle B."/>
            <person name="Rieger M."/>
            <person name="Riles L."/>
            <person name="Rinaldi T."/>
            <person name="Robben J."/>
            <person name="Rodrigues-Pousada C."/>
            <person name="Rodriguez-Belmonte E."/>
            <person name="Rodriguez-Torres A.M."/>
            <person name="Rose M."/>
            <person name="Ruzzi M."/>
            <person name="Saliola M."/>
            <person name="Sanchez-Perez M."/>
            <person name="Schaefer B."/>
            <person name="Schaefer M."/>
            <person name="Scharfe M."/>
            <person name="Schmidheini T."/>
            <person name="Schreer A."/>
            <person name="Skala J."/>
            <person name="Souciet J.-L."/>
            <person name="Steensma H.Y."/>
            <person name="Talla E."/>
            <person name="Thierry A."/>
            <person name="Vandenbol M."/>
            <person name="van der Aart Q.J.M."/>
            <person name="Van Dyck L."/>
            <person name="Vanoni M."/>
            <person name="Verhasselt P."/>
            <person name="Voet M."/>
            <person name="Volckaert G."/>
            <person name="Wambutt R."/>
            <person name="Watson M.D."/>
            <person name="Weber N."/>
            <person name="Wedler E."/>
            <person name="Wedler H."/>
            <person name="Wipfli P."/>
            <person name="Wolf K."/>
            <person name="Wright L.F."/>
            <person name="Zaccaria P."/>
            <person name="Zimmermann M."/>
            <person name="Zollner A."/>
            <person name="Kleine K."/>
        </authorList>
    </citation>
    <scope>NUCLEOTIDE SEQUENCE [LARGE SCALE GENOMIC DNA]</scope>
    <source>
        <strain>ATCC 204508 / S288c</strain>
    </source>
</reference>
<reference key="4">
    <citation type="journal article" date="2014" name="G3 (Bethesda)">
        <title>The reference genome sequence of Saccharomyces cerevisiae: Then and now.</title>
        <authorList>
            <person name="Engel S.R."/>
            <person name="Dietrich F.S."/>
            <person name="Fisk D.G."/>
            <person name="Binkley G."/>
            <person name="Balakrishnan R."/>
            <person name="Costanzo M.C."/>
            <person name="Dwight S.S."/>
            <person name="Hitz B.C."/>
            <person name="Karra K."/>
            <person name="Nash R.S."/>
            <person name="Weng S."/>
            <person name="Wong E.D."/>
            <person name="Lloyd P."/>
            <person name="Skrzypek M.S."/>
            <person name="Miyasato S.R."/>
            <person name="Simison M."/>
            <person name="Cherry J.M."/>
        </authorList>
    </citation>
    <scope>GENOME REANNOTATION</scope>
    <source>
        <strain>ATCC 204508 / S288c</strain>
    </source>
</reference>
<reference key="5">
    <citation type="journal article" date="2003" name="Nature">
        <title>Global analysis of protein expression in yeast.</title>
        <authorList>
            <person name="Ghaemmaghami S."/>
            <person name="Huh W.-K."/>
            <person name="Bower K."/>
            <person name="Howson R.W."/>
            <person name="Belle A."/>
            <person name="Dephoure N."/>
            <person name="O'Shea E.K."/>
            <person name="Weissman J.S."/>
        </authorList>
    </citation>
    <scope>LEVEL OF PROTEIN EXPRESSION [LARGE SCALE ANALYSIS]</scope>
</reference>
<dbReference type="EMBL" id="X69566">
    <property type="protein sequence ID" value="CAA49291.1"/>
    <property type="molecule type" value="Genomic_DNA"/>
</dbReference>
<dbReference type="EMBL" id="DQ115391">
    <property type="protein sequence ID" value="AAZ22464.1"/>
    <property type="molecule type" value="Genomic_DNA"/>
</dbReference>
<dbReference type="EMBL" id="Z72834">
    <property type="protein sequence ID" value="CAA97049.1"/>
    <property type="molecule type" value="Genomic_DNA"/>
</dbReference>
<dbReference type="EMBL" id="BK006941">
    <property type="protein sequence ID" value="DAA08147.1"/>
    <property type="molecule type" value="Genomic_DNA"/>
</dbReference>
<dbReference type="PIR" id="S30093">
    <property type="entry name" value="S30093"/>
</dbReference>
<dbReference type="RefSeq" id="NP_011563.1">
    <property type="nucleotide sequence ID" value="NM_001181178.1"/>
</dbReference>
<dbReference type="BioGRID" id="33296">
    <property type="interactions" value="60"/>
</dbReference>
<dbReference type="DIP" id="DIP-1870N"/>
<dbReference type="FunCoup" id="P32564">
    <property type="interactions" value="54"/>
</dbReference>
<dbReference type="IntAct" id="P32564">
    <property type="interactions" value="3"/>
</dbReference>
<dbReference type="MINT" id="P32564"/>
<dbReference type="STRING" id="4932.YGR049W"/>
<dbReference type="iPTMnet" id="P32564"/>
<dbReference type="PaxDb" id="4932-YGR049W"/>
<dbReference type="PeptideAtlas" id="P32564"/>
<dbReference type="DNASU" id="852940"/>
<dbReference type="EnsemblFungi" id="YGR049W_mRNA">
    <property type="protein sequence ID" value="YGR049W"/>
    <property type="gene ID" value="YGR049W"/>
</dbReference>
<dbReference type="GeneID" id="852940"/>
<dbReference type="KEGG" id="sce:YGR049W"/>
<dbReference type="AGR" id="SGD:S000003281"/>
<dbReference type="SGD" id="S000003281">
    <property type="gene designation" value="SCM4"/>
</dbReference>
<dbReference type="VEuPathDB" id="FungiDB:YGR049W"/>
<dbReference type="eggNOG" id="ENOG502S9YE">
    <property type="taxonomic scope" value="Eukaryota"/>
</dbReference>
<dbReference type="GeneTree" id="ENSGT00940000176491"/>
<dbReference type="HOGENOM" id="CLU_105986_0_0_1"/>
<dbReference type="InParanoid" id="P32564"/>
<dbReference type="OMA" id="HLACVIG"/>
<dbReference type="OrthoDB" id="4046421at2759"/>
<dbReference type="BioCyc" id="YEAST:G3O-30767-MONOMER"/>
<dbReference type="BioGRID-ORCS" id="852940">
    <property type="hits" value="1 hit in 10 CRISPR screens"/>
</dbReference>
<dbReference type="PRO" id="PR:P32564"/>
<dbReference type="Proteomes" id="UP000002311">
    <property type="component" value="Chromosome VII"/>
</dbReference>
<dbReference type="RNAct" id="P32564">
    <property type="molecule type" value="protein"/>
</dbReference>
<dbReference type="GO" id="GO:0005741">
    <property type="term" value="C:mitochondrial outer membrane"/>
    <property type="evidence" value="ECO:0007005"/>
    <property type="project" value="SGD"/>
</dbReference>
<dbReference type="GO" id="GO:0005739">
    <property type="term" value="C:mitochondrion"/>
    <property type="evidence" value="ECO:0007005"/>
    <property type="project" value="SGD"/>
</dbReference>
<dbReference type="GO" id="GO:0000422">
    <property type="term" value="P:autophagy of mitochondrion"/>
    <property type="evidence" value="ECO:0000318"/>
    <property type="project" value="GO_Central"/>
</dbReference>
<dbReference type="GO" id="GO:0016236">
    <property type="term" value="P:macroautophagy"/>
    <property type="evidence" value="ECO:0000318"/>
    <property type="project" value="GO_Central"/>
</dbReference>
<dbReference type="InterPro" id="IPR051668">
    <property type="entry name" value="ATG33"/>
</dbReference>
<dbReference type="PANTHER" id="PTHR37278">
    <property type="entry name" value="AUTOPHAGY-RELATED PROTEIN 33-RELATED"/>
    <property type="match status" value="1"/>
</dbReference>
<dbReference type="PANTHER" id="PTHR37278:SF1">
    <property type="entry name" value="AUTOPHAGY-RELATED PROTEIN 33-RELATED"/>
    <property type="match status" value="1"/>
</dbReference>
<feature type="chain" id="PRO_0000097626" description="Protein SCM4">
    <location>
        <begin position="1"/>
        <end position="187"/>
    </location>
</feature>
<feature type="transmembrane region" description="Helical" evidence="1">
    <location>
        <begin position="11"/>
        <end position="31"/>
    </location>
</feature>
<feature type="transmembrane region" description="Helical" evidence="1">
    <location>
        <begin position="45"/>
        <end position="65"/>
    </location>
</feature>
<feature type="transmembrane region" description="Helical" evidence="1">
    <location>
        <begin position="80"/>
        <end position="100"/>
    </location>
</feature>
<feature type="transmembrane region" description="Helical" evidence="1">
    <location>
        <begin position="162"/>
        <end position="182"/>
    </location>
</feature>
<feature type="region of interest" description="Disordered" evidence="2">
    <location>
        <begin position="114"/>
        <end position="135"/>
    </location>
</feature>
<feature type="compositionally biased region" description="Basic and acidic residues" evidence="2">
    <location>
        <begin position="114"/>
        <end position="134"/>
    </location>
</feature>
<name>SCM4_YEAST</name>
<accession>P32564</accession>
<accession>D6VUI6</accession>
<accession>Q45U35</accession>
<evidence type="ECO:0000255" key="1"/>
<evidence type="ECO:0000256" key="2">
    <source>
        <dbReference type="SAM" id="MobiDB-lite"/>
    </source>
</evidence>
<evidence type="ECO:0000269" key="3">
    <source>
    </source>
</evidence>
<evidence type="ECO:0000305" key="4"/>
<protein>
    <recommendedName>
        <fullName>Protein SCM4</fullName>
    </recommendedName>
    <alternativeName>
        <fullName>Suppressor of CDC4 mutation 4</fullName>
    </alternativeName>
</protein>